<gene>
    <name evidence="1" type="primary">ybjQ</name>
    <name type="ordered locus">SeAg_B0930</name>
</gene>
<organism>
    <name type="scientific">Salmonella agona (strain SL483)</name>
    <dbReference type="NCBI Taxonomy" id="454166"/>
    <lineage>
        <taxon>Bacteria</taxon>
        <taxon>Pseudomonadati</taxon>
        <taxon>Pseudomonadota</taxon>
        <taxon>Gammaproteobacteria</taxon>
        <taxon>Enterobacterales</taxon>
        <taxon>Enterobacteriaceae</taxon>
        <taxon>Salmonella</taxon>
    </lineage>
</organism>
<proteinExistence type="inferred from homology"/>
<feature type="chain" id="PRO_1000120009" description="UPF0145 protein YbjQ">
    <location>
        <begin position="1"/>
        <end position="107"/>
    </location>
</feature>
<name>YBJQ_SALA4</name>
<dbReference type="EMBL" id="CP001138">
    <property type="protein sequence ID" value="ACH48826.1"/>
    <property type="molecule type" value="Genomic_DNA"/>
</dbReference>
<dbReference type="RefSeq" id="WP_001160725.1">
    <property type="nucleotide sequence ID" value="NC_011149.1"/>
</dbReference>
<dbReference type="SMR" id="B5F111"/>
<dbReference type="KEGG" id="sea:SeAg_B0930"/>
<dbReference type="HOGENOM" id="CLU_117144_3_0_6"/>
<dbReference type="Proteomes" id="UP000008819">
    <property type="component" value="Chromosome"/>
</dbReference>
<dbReference type="Gene3D" id="3.30.110.70">
    <property type="entry name" value="Hypothetical protein apc22750. Chain B"/>
    <property type="match status" value="1"/>
</dbReference>
<dbReference type="HAMAP" id="MF_00338">
    <property type="entry name" value="UPF0145"/>
    <property type="match status" value="1"/>
</dbReference>
<dbReference type="InterPro" id="IPR035439">
    <property type="entry name" value="UPF0145_dom_sf"/>
</dbReference>
<dbReference type="InterPro" id="IPR002765">
    <property type="entry name" value="UPF0145_YbjQ-like"/>
</dbReference>
<dbReference type="NCBIfam" id="NF002776">
    <property type="entry name" value="PRK02877.1"/>
    <property type="match status" value="1"/>
</dbReference>
<dbReference type="PANTHER" id="PTHR34068">
    <property type="entry name" value="UPF0145 PROTEIN YBJQ"/>
    <property type="match status" value="1"/>
</dbReference>
<dbReference type="PANTHER" id="PTHR34068:SF1">
    <property type="entry name" value="UPF0145 PROTEIN YBJQ"/>
    <property type="match status" value="1"/>
</dbReference>
<dbReference type="Pfam" id="PF01906">
    <property type="entry name" value="YbjQ_1"/>
    <property type="match status" value="1"/>
</dbReference>
<dbReference type="SUPFAM" id="SSF117782">
    <property type="entry name" value="YbjQ-like"/>
    <property type="match status" value="1"/>
</dbReference>
<evidence type="ECO:0000255" key="1">
    <source>
        <dbReference type="HAMAP-Rule" id="MF_00338"/>
    </source>
</evidence>
<accession>B5F111</accession>
<reference key="1">
    <citation type="journal article" date="2011" name="J. Bacteriol.">
        <title>Comparative genomics of 28 Salmonella enterica isolates: evidence for CRISPR-mediated adaptive sublineage evolution.</title>
        <authorList>
            <person name="Fricke W.F."/>
            <person name="Mammel M.K."/>
            <person name="McDermott P.F."/>
            <person name="Tartera C."/>
            <person name="White D.G."/>
            <person name="Leclerc J.E."/>
            <person name="Ravel J."/>
            <person name="Cebula T.A."/>
        </authorList>
    </citation>
    <scope>NUCLEOTIDE SEQUENCE [LARGE SCALE GENOMIC DNA]</scope>
    <source>
        <strain>SL483</strain>
    </source>
</reference>
<protein>
    <recommendedName>
        <fullName evidence="1">UPF0145 protein YbjQ</fullName>
    </recommendedName>
</protein>
<sequence>MQFSTTPTLEGQSIVEYCGVVTGEAILGANIFRDFFAGIRDIVGGRSGAYEKELRKAREIAFQELGEQAKALGADAVVGIDIDYETVGKDGSMLMVSVSGTAVKTRR</sequence>
<comment type="similarity">
    <text evidence="1">Belongs to the UPF0145 family.</text>
</comment>